<keyword id="KW-0997">Cell inner membrane</keyword>
<keyword id="KW-1003">Cell membrane</keyword>
<keyword id="KW-0472">Membrane</keyword>
<keyword id="KW-0520">NAD</keyword>
<keyword id="KW-0874">Quinone</keyword>
<keyword id="KW-1185">Reference proteome</keyword>
<keyword id="KW-1278">Translocase</keyword>
<keyword id="KW-0812">Transmembrane</keyword>
<keyword id="KW-1133">Transmembrane helix</keyword>
<keyword id="KW-0813">Transport</keyword>
<keyword id="KW-0830">Ubiquinone</keyword>
<dbReference type="EC" id="7.1.1.-" evidence="1"/>
<dbReference type="EMBL" id="CP001280">
    <property type="protein sequence ID" value="ACK51844.1"/>
    <property type="molecule type" value="Genomic_DNA"/>
</dbReference>
<dbReference type="RefSeq" id="WP_012591913.1">
    <property type="nucleotide sequence ID" value="NC_011666.1"/>
</dbReference>
<dbReference type="SMR" id="B8EIM7"/>
<dbReference type="STRING" id="395965.Msil_2928"/>
<dbReference type="KEGG" id="msl:Msil_2928"/>
<dbReference type="eggNOG" id="COG0713">
    <property type="taxonomic scope" value="Bacteria"/>
</dbReference>
<dbReference type="HOGENOM" id="CLU_144724_2_0_5"/>
<dbReference type="OrthoDB" id="9811124at2"/>
<dbReference type="Proteomes" id="UP000002257">
    <property type="component" value="Chromosome"/>
</dbReference>
<dbReference type="GO" id="GO:0030964">
    <property type="term" value="C:NADH dehydrogenase complex"/>
    <property type="evidence" value="ECO:0007669"/>
    <property type="project" value="TreeGrafter"/>
</dbReference>
<dbReference type="GO" id="GO:0005886">
    <property type="term" value="C:plasma membrane"/>
    <property type="evidence" value="ECO:0007669"/>
    <property type="project" value="UniProtKB-SubCell"/>
</dbReference>
<dbReference type="GO" id="GO:0050136">
    <property type="term" value="F:NADH:ubiquinone reductase (non-electrogenic) activity"/>
    <property type="evidence" value="ECO:0007669"/>
    <property type="project" value="UniProtKB-UniRule"/>
</dbReference>
<dbReference type="GO" id="GO:0048038">
    <property type="term" value="F:quinone binding"/>
    <property type="evidence" value="ECO:0007669"/>
    <property type="project" value="UniProtKB-KW"/>
</dbReference>
<dbReference type="GO" id="GO:0042773">
    <property type="term" value="P:ATP synthesis coupled electron transport"/>
    <property type="evidence" value="ECO:0007669"/>
    <property type="project" value="InterPro"/>
</dbReference>
<dbReference type="FunFam" id="1.10.287.3510:FF:000001">
    <property type="entry name" value="NADH-quinone oxidoreductase subunit K"/>
    <property type="match status" value="1"/>
</dbReference>
<dbReference type="Gene3D" id="1.10.287.3510">
    <property type="match status" value="1"/>
</dbReference>
<dbReference type="HAMAP" id="MF_01456">
    <property type="entry name" value="NDH1_NuoK"/>
    <property type="match status" value="1"/>
</dbReference>
<dbReference type="InterPro" id="IPR001133">
    <property type="entry name" value="NADH_UbQ_OxRdtase_chain4L/K"/>
</dbReference>
<dbReference type="InterPro" id="IPR039428">
    <property type="entry name" value="NUOK/Mnh_C1-like"/>
</dbReference>
<dbReference type="NCBIfam" id="NF004320">
    <property type="entry name" value="PRK05715.1-2"/>
    <property type="match status" value="1"/>
</dbReference>
<dbReference type="NCBIfam" id="NF004321">
    <property type="entry name" value="PRK05715.1-3"/>
    <property type="match status" value="1"/>
</dbReference>
<dbReference type="NCBIfam" id="NF004323">
    <property type="entry name" value="PRK05715.1-5"/>
    <property type="match status" value="1"/>
</dbReference>
<dbReference type="PANTHER" id="PTHR11434:SF21">
    <property type="entry name" value="NADH DEHYDROGENASE SUBUNIT 4L-RELATED"/>
    <property type="match status" value="1"/>
</dbReference>
<dbReference type="PANTHER" id="PTHR11434">
    <property type="entry name" value="NADH-UBIQUINONE OXIDOREDUCTASE SUBUNIT ND4L"/>
    <property type="match status" value="1"/>
</dbReference>
<dbReference type="Pfam" id="PF00420">
    <property type="entry name" value="Oxidored_q2"/>
    <property type="match status" value="1"/>
</dbReference>
<reference key="1">
    <citation type="journal article" date="2010" name="J. Bacteriol.">
        <title>Complete genome sequence of the aerobic facultative methanotroph Methylocella silvestris BL2.</title>
        <authorList>
            <person name="Chen Y."/>
            <person name="Crombie A."/>
            <person name="Rahman M.T."/>
            <person name="Dedysh S.N."/>
            <person name="Liesack W."/>
            <person name="Stott M.B."/>
            <person name="Alam M."/>
            <person name="Theisen A.R."/>
            <person name="Murrell J.C."/>
            <person name="Dunfield P.F."/>
        </authorList>
    </citation>
    <scope>NUCLEOTIDE SEQUENCE [LARGE SCALE GENOMIC DNA]</scope>
    <source>
        <strain>DSM 15510 / CIP 108128 / LMG 27833 / NCIMB 13906 / BL2</strain>
    </source>
</reference>
<accession>B8EIM7</accession>
<comment type="function">
    <text evidence="1">NDH-1 shuttles electrons from NADH, via FMN and iron-sulfur (Fe-S) centers, to quinones in the respiratory chain. The immediate electron acceptor for the enzyme in this species is believed to be ubiquinone. Couples the redox reaction to proton translocation (for every two electrons transferred, four hydrogen ions are translocated across the cytoplasmic membrane), and thus conserves the redox energy in a proton gradient.</text>
</comment>
<comment type="catalytic activity">
    <reaction evidence="1">
        <text>a quinone + NADH + 5 H(+)(in) = a quinol + NAD(+) + 4 H(+)(out)</text>
        <dbReference type="Rhea" id="RHEA:57888"/>
        <dbReference type="ChEBI" id="CHEBI:15378"/>
        <dbReference type="ChEBI" id="CHEBI:24646"/>
        <dbReference type="ChEBI" id="CHEBI:57540"/>
        <dbReference type="ChEBI" id="CHEBI:57945"/>
        <dbReference type="ChEBI" id="CHEBI:132124"/>
    </reaction>
</comment>
<comment type="subunit">
    <text evidence="1">NDH-1 is composed of 14 different subunits. Subunits NuoA, H, J, K, L, M, N constitute the membrane sector of the complex.</text>
</comment>
<comment type="subcellular location">
    <subcellularLocation>
        <location evidence="1">Cell inner membrane</location>
        <topology evidence="1">Multi-pass membrane protein</topology>
    </subcellularLocation>
</comment>
<comment type="similarity">
    <text evidence="1">Belongs to the complex I subunit 4L family.</text>
</comment>
<proteinExistence type="inferred from homology"/>
<name>NUOK_METSB</name>
<organism>
    <name type="scientific">Methylocella silvestris (strain DSM 15510 / CIP 108128 / LMG 27833 / NCIMB 13906 / BL2)</name>
    <dbReference type="NCBI Taxonomy" id="395965"/>
    <lineage>
        <taxon>Bacteria</taxon>
        <taxon>Pseudomonadati</taxon>
        <taxon>Pseudomonadota</taxon>
        <taxon>Alphaproteobacteria</taxon>
        <taxon>Hyphomicrobiales</taxon>
        <taxon>Beijerinckiaceae</taxon>
        <taxon>Methylocella</taxon>
    </lineage>
</organism>
<protein>
    <recommendedName>
        <fullName evidence="1">NADH-quinone oxidoreductase subunit K</fullName>
        <ecNumber evidence="1">7.1.1.-</ecNumber>
    </recommendedName>
    <alternativeName>
        <fullName evidence="1">NADH dehydrogenase I subunit K</fullName>
    </alternativeName>
    <alternativeName>
        <fullName evidence="1">NDH-1 subunit K</fullName>
    </alternativeName>
</protein>
<evidence type="ECO:0000255" key="1">
    <source>
        <dbReference type="HAMAP-Rule" id="MF_01456"/>
    </source>
</evidence>
<feature type="chain" id="PRO_0000390120" description="NADH-quinone oxidoreductase subunit K">
    <location>
        <begin position="1"/>
        <end position="102"/>
    </location>
</feature>
<feature type="transmembrane region" description="Helical" evidence="1">
    <location>
        <begin position="5"/>
        <end position="25"/>
    </location>
</feature>
<feature type="transmembrane region" description="Helical" evidence="1">
    <location>
        <begin position="30"/>
        <end position="50"/>
    </location>
</feature>
<feature type="transmembrane region" description="Helical" evidence="1">
    <location>
        <begin position="62"/>
        <end position="82"/>
    </location>
</feature>
<gene>
    <name evidence="1" type="primary">nuoK</name>
    <name type="ordered locus">Msil_2928</name>
</gene>
<sequence length="102" mass="10949">MILSLSHFLIVAAMLFTIGVAGIILNRKNIIVVLMSVELILLSVNINLVSFSSFFGDLTGQVFSLFVLTVAAAEAAIGLAILVAYYRNRGSIAVEDINMMKG</sequence>